<name>NUOH_PHEZH</name>
<comment type="function">
    <text evidence="1">NDH-1 shuttles electrons from NADH, via FMN and iron-sulfur (Fe-S) centers, to quinones in the respiratory chain. The immediate electron acceptor for the enzyme in this species is believed to be ubiquinone. Couples the redox reaction to proton translocation (for every two electrons transferred, four hydrogen ions are translocated across the cytoplasmic membrane), and thus conserves the redox energy in a proton gradient. This subunit may bind ubiquinone.</text>
</comment>
<comment type="catalytic activity">
    <reaction evidence="1">
        <text>a quinone + NADH + 5 H(+)(in) = a quinol + NAD(+) + 4 H(+)(out)</text>
        <dbReference type="Rhea" id="RHEA:57888"/>
        <dbReference type="ChEBI" id="CHEBI:15378"/>
        <dbReference type="ChEBI" id="CHEBI:24646"/>
        <dbReference type="ChEBI" id="CHEBI:57540"/>
        <dbReference type="ChEBI" id="CHEBI:57945"/>
        <dbReference type="ChEBI" id="CHEBI:132124"/>
    </reaction>
</comment>
<comment type="subunit">
    <text evidence="1">NDH-1 is composed of 14 different subunits. Subunits NuoA, H, J, K, L, M, N constitute the membrane sector of the complex.</text>
</comment>
<comment type="subcellular location">
    <subcellularLocation>
        <location evidence="1">Cell inner membrane</location>
        <topology evidence="1">Multi-pass membrane protein</topology>
    </subcellularLocation>
</comment>
<comment type="similarity">
    <text evidence="1">Belongs to the complex I subunit 1 family.</text>
</comment>
<feature type="chain" id="PRO_1000143610" description="NADH-quinone oxidoreductase subunit H">
    <location>
        <begin position="1"/>
        <end position="364"/>
    </location>
</feature>
<feature type="transmembrane region" description="Helical" evidence="1">
    <location>
        <begin position="21"/>
        <end position="41"/>
    </location>
</feature>
<feature type="transmembrane region" description="Helical" evidence="1">
    <location>
        <begin position="88"/>
        <end position="108"/>
    </location>
</feature>
<feature type="transmembrane region" description="Helical" evidence="1">
    <location>
        <begin position="120"/>
        <end position="140"/>
    </location>
</feature>
<feature type="transmembrane region" description="Helical" evidence="1">
    <location>
        <begin position="159"/>
        <end position="179"/>
    </location>
</feature>
<feature type="transmembrane region" description="Helical" evidence="1">
    <location>
        <begin position="208"/>
        <end position="228"/>
    </location>
</feature>
<feature type="transmembrane region" description="Helical" evidence="1">
    <location>
        <begin position="267"/>
        <end position="287"/>
    </location>
</feature>
<feature type="transmembrane region" description="Helical" evidence="1">
    <location>
        <begin position="301"/>
        <end position="321"/>
    </location>
</feature>
<feature type="transmembrane region" description="Helical" evidence="1">
    <location>
        <begin position="340"/>
        <end position="360"/>
    </location>
</feature>
<keyword id="KW-0997">Cell inner membrane</keyword>
<keyword id="KW-1003">Cell membrane</keyword>
<keyword id="KW-0472">Membrane</keyword>
<keyword id="KW-0520">NAD</keyword>
<keyword id="KW-0874">Quinone</keyword>
<keyword id="KW-1185">Reference proteome</keyword>
<keyword id="KW-1278">Translocase</keyword>
<keyword id="KW-0812">Transmembrane</keyword>
<keyword id="KW-1133">Transmembrane helix</keyword>
<keyword id="KW-0830">Ubiquinone</keyword>
<sequence length="364" mass="39974">MMDPAATSFWATPVGWTLVTAGQILAVMIWILLSLAFLLLADRKIWAGVQMRKGPNVVGPFGLLQSFADFLKFVLKEIVIPSGADKTVFLLAPLISFTLAFAAWAVIPLAPGWVVSDINVGILYLFAISSLGVYGIIMGGWASNSKYPFLGSLRSAAQMVSYEVSIGFIIITVILLAGSMNLQQIVASQTGGFWNWYVFGGPGGLAKLPLLLVMVPMAVIFFISGLAETNRPPFDLPEAESELVAGYQVEYSSTPYLLFMIGEYANIVLICAMTTILFFGGWSAPFPSDFTDSWAPTAASFYYFMWFFLKVIFFFFLVSMAKAIVPRYRYDQLMRLGWKVFLPFSLVCVALIAAWRVFGPAAAA</sequence>
<gene>
    <name evidence="1" type="primary">nuoH</name>
    <name type="ordered locus">PHZ_c1797</name>
</gene>
<dbReference type="EC" id="7.1.1.-" evidence="1"/>
<dbReference type="EMBL" id="CP000747">
    <property type="protein sequence ID" value="ACG78208.1"/>
    <property type="molecule type" value="Genomic_DNA"/>
</dbReference>
<dbReference type="SMR" id="B4RCM1"/>
<dbReference type="STRING" id="450851.PHZ_c1797"/>
<dbReference type="KEGG" id="pzu:PHZ_c1797"/>
<dbReference type="eggNOG" id="COG1005">
    <property type="taxonomic scope" value="Bacteria"/>
</dbReference>
<dbReference type="HOGENOM" id="CLU_015134_0_1_5"/>
<dbReference type="Proteomes" id="UP000001868">
    <property type="component" value="Chromosome"/>
</dbReference>
<dbReference type="GO" id="GO:0005886">
    <property type="term" value="C:plasma membrane"/>
    <property type="evidence" value="ECO:0007669"/>
    <property type="project" value="UniProtKB-SubCell"/>
</dbReference>
<dbReference type="GO" id="GO:0003954">
    <property type="term" value="F:NADH dehydrogenase activity"/>
    <property type="evidence" value="ECO:0007669"/>
    <property type="project" value="TreeGrafter"/>
</dbReference>
<dbReference type="GO" id="GO:0016655">
    <property type="term" value="F:oxidoreductase activity, acting on NAD(P)H, quinone or similar compound as acceptor"/>
    <property type="evidence" value="ECO:0007669"/>
    <property type="project" value="UniProtKB-UniRule"/>
</dbReference>
<dbReference type="GO" id="GO:0048038">
    <property type="term" value="F:quinone binding"/>
    <property type="evidence" value="ECO:0007669"/>
    <property type="project" value="UniProtKB-KW"/>
</dbReference>
<dbReference type="GO" id="GO:0009060">
    <property type="term" value="P:aerobic respiration"/>
    <property type="evidence" value="ECO:0007669"/>
    <property type="project" value="TreeGrafter"/>
</dbReference>
<dbReference type="HAMAP" id="MF_01350">
    <property type="entry name" value="NDH1_NuoH"/>
    <property type="match status" value="1"/>
</dbReference>
<dbReference type="InterPro" id="IPR001694">
    <property type="entry name" value="NADH_UbQ_OxRdtase_su1/FPO"/>
</dbReference>
<dbReference type="InterPro" id="IPR018086">
    <property type="entry name" value="NADH_UbQ_OxRdtase_su1_CS"/>
</dbReference>
<dbReference type="NCBIfam" id="NF004745">
    <property type="entry name" value="PRK06076.1-6"/>
    <property type="match status" value="1"/>
</dbReference>
<dbReference type="PANTHER" id="PTHR11432">
    <property type="entry name" value="NADH DEHYDROGENASE SUBUNIT 1"/>
    <property type="match status" value="1"/>
</dbReference>
<dbReference type="PANTHER" id="PTHR11432:SF3">
    <property type="entry name" value="NADH-UBIQUINONE OXIDOREDUCTASE CHAIN 1"/>
    <property type="match status" value="1"/>
</dbReference>
<dbReference type="Pfam" id="PF00146">
    <property type="entry name" value="NADHdh"/>
    <property type="match status" value="1"/>
</dbReference>
<dbReference type="PROSITE" id="PS00668">
    <property type="entry name" value="COMPLEX1_ND1_2"/>
    <property type="match status" value="1"/>
</dbReference>
<organism>
    <name type="scientific">Phenylobacterium zucineum (strain HLK1)</name>
    <dbReference type="NCBI Taxonomy" id="450851"/>
    <lineage>
        <taxon>Bacteria</taxon>
        <taxon>Pseudomonadati</taxon>
        <taxon>Pseudomonadota</taxon>
        <taxon>Alphaproteobacteria</taxon>
        <taxon>Caulobacterales</taxon>
        <taxon>Caulobacteraceae</taxon>
        <taxon>Phenylobacterium</taxon>
    </lineage>
</organism>
<protein>
    <recommendedName>
        <fullName evidence="1">NADH-quinone oxidoreductase subunit H</fullName>
        <ecNumber evidence="1">7.1.1.-</ecNumber>
    </recommendedName>
    <alternativeName>
        <fullName evidence="1">NADH dehydrogenase I subunit H</fullName>
    </alternativeName>
    <alternativeName>
        <fullName evidence="1">NDH-1 subunit H</fullName>
    </alternativeName>
</protein>
<evidence type="ECO:0000255" key="1">
    <source>
        <dbReference type="HAMAP-Rule" id="MF_01350"/>
    </source>
</evidence>
<accession>B4RCM1</accession>
<reference key="1">
    <citation type="journal article" date="2008" name="BMC Genomics">
        <title>Complete genome of Phenylobacterium zucineum - a novel facultative intracellular bacterium isolated from human erythroleukemia cell line K562.</title>
        <authorList>
            <person name="Luo Y."/>
            <person name="Xu X."/>
            <person name="Ding Z."/>
            <person name="Liu Z."/>
            <person name="Zhang B."/>
            <person name="Yan Z."/>
            <person name="Sun J."/>
            <person name="Hu S."/>
            <person name="Hu X."/>
        </authorList>
    </citation>
    <scope>NUCLEOTIDE SEQUENCE [LARGE SCALE GENOMIC DNA]</scope>
    <source>
        <strain>HLK1</strain>
    </source>
</reference>
<proteinExistence type="inferred from homology"/>